<comment type="function">
    <text evidence="3">Snake venom metalloproteinase that inhibits the classical complement pathway dose-dependently. It acts by binding to carbohydrates of IgG within the antibody-sensitized sheep erythrocytes (EA) complex, and thus prevents interaction of component C2 with immobilized C4b. Also induces cation-independent hemagglutination that can be prevented by D-galactose pretreatment.</text>
</comment>
<comment type="cofactor">
    <cofactor evidence="1">
        <name>Zn(2+)</name>
        <dbReference type="ChEBI" id="CHEBI:29105"/>
    </cofactor>
    <text evidence="1">Binds 1 zinc ion per subunit.</text>
</comment>
<comment type="subunit">
    <text evidence="5">Heterotrimer; disulfide-linked. The heterotrimer consists of 1 metalloproteinase chain and 2 lectin chains (Probable).</text>
</comment>
<comment type="subcellular location">
    <subcellularLocation>
        <location>Secreted</location>
    </subcellularLocation>
</comment>
<comment type="tissue specificity">
    <text>Expressed by the venom gland.</text>
</comment>
<comment type="PTM">
    <text>N-glycosylated.</text>
</comment>
<comment type="mass spectrometry"/>
<comment type="miscellaneous">
    <text evidence="5">Negative results: does not show proteolytic activity on rabbit IgG, human C3 and C4 complement components, fibrinogen, beta-casein, hemoglobin, ferritin, myoglobin, chymotrypsinogen, and melittin.</text>
</comment>
<comment type="similarity">
    <text evidence="4">Belongs to the venom metalloproteinase (M12B) family. P-III subfamily. P-IIId sub-subfamily.</text>
</comment>
<reference key="1">
    <citation type="journal article" date="2005" name="Mol. Immunol.">
        <title>Oxiagin from the Naja oxiana cobra venom is the first reprolysin inhibiting the classical pathway of complement.</title>
        <authorList>
            <person name="Shoibonov B.B."/>
            <person name="Osipov A.V."/>
            <person name="Kryukova E.V."/>
            <person name="Zinchenko A.A."/>
            <person name="Lakhtin V.M."/>
            <person name="Tsetlin V.I."/>
            <person name="Utkin Y.N."/>
        </authorList>
    </citation>
    <scope>PROTEIN SEQUENCE</scope>
    <scope>FUNCTION</scope>
    <scope>SUBUNIT</scope>
    <scope>MASS SPECTROMETRY</scope>
    <source>
        <tissue>Venom</tissue>
    </source>
</reference>
<protein>
    <recommendedName>
        <fullName>Zinc metalloproteinase oxiagin</fullName>
        <ecNumber>3.4.24.-</ecNumber>
    </recommendedName>
    <alternativeName>
        <fullName>Snake venom metalloprotease</fullName>
        <shortName>SVMP</shortName>
    </alternativeName>
</protein>
<organism>
    <name type="scientific">Naja oxiana</name>
    <name type="common">Central Asian cobra</name>
    <name type="synonym">Oxus cobra</name>
    <dbReference type="NCBI Taxonomy" id="8657"/>
    <lineage>
        <taxon>Eukaryota</taxon>
        <taxon>Metazoa</taxon>
        <taxon>Chordata</taxon>
        <taxon>Craniata</taxon>
        <taxon>Vertebrata</taxon>
        <taxon>Euteleostomi</taxon>
        <taxon>Lepidosauria</taxon>
        <taxon>Squamata</taxon>
        <taxon>Bifurcata</taxon>
        <taxon>Unidentata</taxon>
        <taxon>Episquamata</taxon>
        <taxon>Toxicofera</taxon>
        <taxon>Serpentes</taxon>
        <taxon>Colubroidea</taxon>
        <taxon>Elapidae</taxon>
        <taxon>Elapinae</taxon>
        <taxon>Naja</taxon>
    </lineage>
</organism>
<sequence>TNTPEQQCYLQAKCYIEFYVVV</sequence>
<dbReference type="EC" id="3.4.24.-"/>
<dbReference type="GO" id="GO:0005576">
    <property type="term" value="C:extracellular region"/>
    <property type="evidence" value="ECO:0007669"/>
    <property type="project" value="UniProtKB-SubCell"/>
</dbReference>
<dbReference type="GO" id="GO:0046872">
    <property type="term" value="F:metal ion binding"/>
    <property type="evidence" value="ECO:0007669"/>
    <property type="project" value="UniProtKB-KW"/>
</dbReference>
<dbReference type="GO" id="GO:0008237">
    <property type="term" value="F:metallopeptidase activity"/>
    <property type="evidence" value="ECO:0007669"/>
    <property type="project" value="UniProtKB-KW"/>
</dbReference>
<dbReference type="GO" id="GO:0090729">
    <property type="term" value="F:toxin activity"/>
    <property type="evidence" value="ECO:0007669"/>
    <property type="project" value="UniProtKB-KW"/>
</dbReference>
<dbReference type="GO" id="GO:0006508">
    <property type="term" value="P:proteolysis"/>
    <property type="evidence" value="ECO:0007669"/>
    <property type="project" value="UniProtKB-KW"/>
</dbReference>
<accession>P0DJJ4</accession>
<keyword id="KW-1217">Cell adhesion impairing toxin</keyword>
<keyword id="KW-1216">Complement system impairing toxin</keyword>
<keyword id="KW-0903">Direct protein sequencing</keyword>
<keyword id="KW-1015">Disulfide bond</keyword>
<keyword id="KW-0325">Glycoprotein</keyword>
<keyword id="KW-0378">Hydrolase</keyword>
<keyword id="KW-0479">Metal-binding</keyword>
<keyword id="KW-0482">Metalloprotease</keyword>
<keyword id="KW-0645">Protease</keyword>
<keyword id="KW-0964">Secreted</keyword>
<keyword id="KW-0800">Toxin</keyword>
<keyword id="KW-0862">Zinc</keyword>
<name>VM3_NAJOX</name>
<feature type="chain" id="PRO_0000418194" description="Zinc metalloproteinase oxiagin">
    <location>
        <begin position="1"/>
        <end position="22" status="greater than"/>
    </location>
</feature>
<feature type="domain" description="Peptidase M12B" evidence="2">
    <location>
        <begin position="14"/>
        <end position="22" status="greater than"/>
    </location>
</feature>
<feature type="disulfide bond" evidence="1">
    <location>
        <begin position="8"/>
        <end status="unknown"/>
    </location>
</feature>
<feature type="disulfide bond" evidence="1">
    <location>
        <begin position="14"/>
        <end status="unknown"/>
    </location>
</feature>
<feature type="non-terminal residue">
    <location>
        <position position="22"/>
    </location>
</feature>
<proteinExistence type="evidence at protein level"/>
<evidence type="ECO:0000250" key="1"/>
<evidence type="ECO:0000255" key="2">
    <source>
        <dbReference type="PROSITE-ProRule" id="PRU00276"/>
    </source>
</evidence>
<evidence type="ECO:0000269" key="3">
    <source>
    </source>
</evidence>
<evidence type="ECO:0000305" key="4"/>
<evidence type="ECO:0000305" key="5">
    <source>
    </source>
</evidence>